<comment type="function">
    <text evidence="1">Part of the Tol-Pal system, which plays a role in outer membrane invagination during cell division and is important for maintaining outer membrane integrity. TolB occupies a key intermediary position in the Tol-Pal system because it communicates directly with both membrane-embedded components, Pal in the outer membrane and TolA in the inner membrane.</text>
</comment>
<comment type="subunit">
    <text evidence="1">The Tol-Pal system is composed of five core proteins: the inner membrane proteins TolA, TolQ and TolR, the periplasmic protein TolB and the outer membrane protein Pal. They form a network linking the inner and outer membranes and the peptidoglycan layer.</text>
</comment>
<comment type="subcellular location">
    <subcellularLocation>
        <location evidence="1">Periplasm</location>
    </subcellularLocation>
</comment>
<comment type="similarity">
    <text evidence="1">Belongs to the TolB family.</text>
</comment>
<accession>Q0TJV4</accession>
<evidence type="ECO:0000255" key="1">
    <source>
        <dbReference type="HAMAP-Rule" id="MF_00671"/>
    </source>
</evidence>
<organism>
    <name type="scientific">Escherichia coli O6:K15:H31 (strain 536 / UPEC)</name>
    <dbReference type="NCBI Taxonomy" id="362663"/>
    <lineage>
        <taxon>Bacteria</taxon>
        <taxon>Pseudomonadati</taxon>
        <taxon>Pseudomonadota</taxon>
        <taxon>Gammaproteobacteria</taxon>
        <taxon>Enterobacterales</taxon>
        <taxon>Enterobacteriaceae</taxon>
        <taxon>Escherichia</taxon>
    </lineage>
</organism>
<name>TOLB_ECOL5</name>
<protein>
    <recommendedName>
        <fullName evidence="1">Tol-Pal system protein TolB</fullName>
    </recommendedName>
</protein>
<feature type="signal peptide" evidence="1">
    <location>
        <begin position="1"/>
        <end position="21"/>
    </location>
</feature>
<feature type="chain" id="PRO_0000259047" description="Tol-Pal system protein TolB" evidence="1">
    <location>
        <begin position="22"/>
        <end position="430"/>
    </location>
</feature>
<reference key="1">
    <citation type="journal article" date="2006" name="Mol. Microbiol.">
        <title>Role of pathogenicity island-associated integrases in the genome plasticity of uropathogenic Escherichia coli strain 536.</title>
        <authorList>
            <person name="Hochhut B."/>
            <person name="Wilde C."/>
            <person name="Balling G."/>
            <person name="Middendorf B."/>
            <person name="Dobrindt U."/>
            <person name="Brzuszkiewicz E."/>
            <person name="Gottschalk G."/>
            <person name="Carniel E."/>
            <person name="Hacker J."/>
        </authorList>
    </citation>
    <scope>NUCLEOTIDE SEQUENCE [LARGE SCALE GENOMIC DNA]</scope>
    <source>
        <strain>536 / UPEC</strain>
    </source>
</reference>
<dbReference type="EMBL" id="CP000247">
    <property type="protein sequence ID" value="ABG68777.1"/>
    <property type="molecule type" value="Genomic_DNA"/>
</dbReference>
<dbReference type="RefSeq" id="WP_001295307.1">
    <property type="nucleotide sequence ID" value="NC_008253.1"/>
</dbReference>
<dbReference type="SMR" id="Q0TJV4"/>
<dbReference type="GeneID" id="93776744"/>
<dbReference type="KEGG" id="ecp:ECP_0751"/>
<dbReference type="HOGENOM" id="CLU_047123_0_0_6"/>
<dbReference type="Proteomes" id="UP000009182">
    <property type="component" value="Chromosome"/>
</dbReference>
<dbReference type="GO" id="GO:0042597">
    <property type="term" value="C:periplasmic space"/>
    <property type="evidence" value="ECO:0007669"/>
    <property type="project" value="UniProtKB-SubCell"/>
</dbReference>
<dbReference type="GO" id="GO:0051301">
    <property type="term" value="P:cell division"/>
    <property type="evidence" value="ECO:0007669"/>
    <property type="project" value="UniProtKB-UniRule"/>
</dbReference>
<dbReference type="GO" id="GO:0017038">
    <property type="term" value="P:protein import"/>
    <property type="evidence" value="ECO:0007669"/>
    <property type="project" value="InterPro"/>
</dbReference>
<dbReference type="FunFam" id="2.120.10.30:FF:000022">
    <property type="entry name" value="Tol-Pal system protein TolB"/>
    <property type="match status" value="1"/>
</dbReference>
<dbReference type="FunFam" id="3.40.50.10070:FF:000001">
    <property type="entry name" value="Tol-Pal system protein TolB"/>
    <property type="match status" value="1"/>
</dbReference>
<dbReference type="Gene3D" id="2.120.10.30">
    <property type="entry name" value="TolB, C-terminal domain"/>
    <property type="match status" value="1"/>
</dbReference>
<dbReference type="Gene3D" id="3.40.50.10070">
    <property type="entry name" value="TolB, N-terminal domain"/>
    <property type="match status" value="1"/>
</dbReference>
<dbReference type="HAMAP" id="MF_00671">
    <property type="entry name" value="TolB"/>
    <property type="match status" value="1"/>
</dbReference>
<dbReference type="InterPro" id="IPR011042">
    <property type="entry name" value="6-blade_b-propeller_TolB-like"/>
</dbReference>
<dbReference type="InterPro" id="IPR011659">
    <property type="entry name" value="PD40"/>
</dbReference>
<dbReference type="InterPro" id="IPR014167">
    <property type="entry name" value="Tol-Pal_TolB"/>
</dbReference>
<dbReference type="InterPro" id="IPR007195">
    <property type="entry name" value="TolB_N"/>
</dbReference>
<dbReference type="NCBIfam" id="TIGR02800">
    <property type="entry name" value="propeller_TolB"/>
    <property type="match status" value="1"/>
</dbReference>
<dbReference type="PANTHER" id="PTHR36842:SF1">
    <property type="entry name" value="PROTEIN TOLB"/>
    <property type="match status" value="1"/>
</dbReference>
<dbReference type="PANTHER" id="PTHR36842">
    <property type="entry name" value="PROTEIN TOLB HOMOLOG"/>
    <property type="match status" value="1"/>
</dbReference>
<dbReference type="Pfam" id="PF07676">
    <property type="entry name" value="PD40"/>
    <property type="match status" value="4"/>
</dbReference>
<dbReference type="Pfam" id="PF04052">
    <property type="entry name" value="TolB_N"/>
    <property type="match status" value="1"/>
</dbReference>
<dbReference type="SUPFAM" id="SSF52964">
    <property type="entry name" value="TolB, N-terminal domain"/>
    <property type="match status" value="1"/>
</dbReference>
<dbReference type="SUPFAM" id="SSF69304">
    <property type="entry name" value="Tricorn protease N-terminal domain"/>
    <property type="match status" value="1"/>
</dbReference>
<proteinExistence type="inferred from homology"/>
<sequence>MKQALRVAFGFLILWASVLHAEVRIVIDSGVDSGRPIGVVPFQWAGPGAAPEDIGGIVAADLRNSGKFNPLDRARLPQQPGSAQEVQPAAWSALGIDAVVVGQVTPNPDGSYNVAYQLVDTGGAPGTVLAQNSYKVNKQWLRYAGHTASDEVFEKLTGIKGAFRTRIAYVVQTNGGQFPYELRVSDYDGYNQFVVHRSPQPLMSPAWSPDGSKLAYVTFESGRSALVIQTLANGAVRQVASFPRHNGAPAFSPDGSKLAFALSKTGSLNLYVMDLASGQIRQVTDGRSNNTEPTWFPDSQNLAFTSDQAGRPQVYKVNINGGAPQRITWEGSQNQDADVSSDGKFMVMVSSNGGQQHIAKQDLATGGVQVLSSTFLDETPSLAPNGTMVIYSSSQGMGSVLNLVSTDGRFKARLPATDGQVKFPAWSPYL</sequence>
<gene>
    <name evidence="1" type="primary">tolB</name>
    <name type="ordered locus">ECP_0751</name>
</gene>
<keyword id="KW-0131">Cell cycle</keyword>
<keyword id="KW-0132">Cell division</keyword>
<keyword id="KW-0574">Periplasm</keyword>
<keyword id="KW-0732">Signal</keyword>